<keyword id="KW-1003">Cell membrane</keyword>
<keyword id="KW-0472">Membrane</keyword>
<keyword id="KW-1185">Reference proteome</keyword>
<keyword id="KW-0812">Transmembrane</keyword>
<keyword id="KW-1133">Transmembrane helix</keyword>
<protein>
    <recommendedName>
        <fullName evidence="1">Flotillin-like protein FloA</fullName>
    </recommendedName>
</protein>
<feature type="chain" id="PRO_0000318628" description="Flotillin-like protein FloA">
    <location>
        <begin position="1"/>
        <end position="333"/>
    </location>
</feature>
<feature type="transmembrane region" description="Helical" evidence="1">
    <location>
        <begin position="8"/>
        <end position="28"/>
    </location>
</feature>
<feature type="transmembrane region" description="Helical" evidence="1">
    <location>
        <begin position="30"/>
        <end position="50"/>
    </location>
</feature>
<organism>
    <name type="scientific">Desulfitobacterium hafniense (strain Y51)</name>
    <dbReference type="NCBI Taxonomy" id="138119"/>
    <lineage>
        <taxon>Bacteria</taxon>
        <taxon>Bacillati</taxon>
        <taxon>Bacillota</taxon>
        <taxon>Clostridia</taxon>
        <taxon>Eubacteriales</taxon>
        <taxon>Desulfitobacteriaceae</taxon>
        <taxon>Desulfitobacterium</taxon>
    </lineage>
</organism>
<sequence length="333" mass="35753">MNMPIEVLMPIILLALALILISVVFTFIPVGLWISALAAGVNVGIFTLVGMRLRRVTPSRIVNPLIKAHKAGLRVTTAQLEAHYLAGGNVDRVVNALIAAERAAIPLQFERAAAIDLAGRDVLEAVQMSVNPKVIETPVVSAVAKNGIELRVKARVTVRANIDRLVGGAGEETIIARVGEGIVTSIGSSLSHEKVLENPDMVSRTVLAKGLDSGTAFEILSIDIADVDVGKNIGAQLQTDQAEADKRIAQAKAEERRAMAVAKEQEMIAYVQEMRAKVVEAESEVPRALAEALKEGKLGVMDYYTMQNIMADTSMRDNIARSSNSNTDSNPKK</sequence>
<reference key="1">
    <citation type="journal article" date="2006" name="J. Bacteriol.">
        <title>Complete genome sequence of the dehalorespiring bacterium Desulfitobacterium hafniense Y51 and comparison with Dehalococcoides ethenogenes 195.</title>
        <authorList>
            <person name="Nonaka H."/>
            <person name="Keresztes G."/>
            <person name="Shinoda Y."/>
            <person name="Ikenaga Y."/>
            <person name="Abe M."/>
            <person name="Naito K."/>
            <person name="Inatomi K."/>
            <person name="Furukawa K."/>
            <person name="Inui M."/>
            <person name="Yukawa H."/>
        </authorList>
    </citation>
    <scope>NUCLEOTIDE SEQUENCE [LARGE SCALE GENOMIC DNA]</scope>
    <source>
        <strain>Y51</strain>
    </source>
</reference>
<evidence type="ECO:0000255" key="1">
    <source>
        <dbReference type="HAMAP-Rule" id="MF_01562"/>
    </source>
</evidence>
<dbReference type="EMBL" id="AP008230">
    <property type="protein sequence ID" value="BAE83536.1"/>
    <property type="molecule type" value="Genomic_DNA"/>
</dbReference>
<dbReference type="SMR" id="Q24WQ6"/>
<dbReference type="STRING" id="138119.DSY1747"/>
<dbReference type="KEGG" id="dsy:DSY1747"/>
<dbReference type="eggNOG" id="COG4864">
    <property type="taxonomic scope" value="Bacteria"/>
</dbReference>
<dbReference type="HOGENOM" id="CLU_836378_0_0_9"/>
<dbReference type="Proteomes" id="UP000001946">
    <property type="component" value="Chromosome"/>
</dbReference>
<dbReference type="GO" id="GO:0045121">
    <property type="term" value="C:membrane raft"/>
    <property type="evidence" value="ECO:0007669"/>
    <property type="project" value="UniProtKB-SubCell"/>
</dbReference>
<dbReference type="GO" id="GO:0005886">
    <property type="term" value="C:plasma membrane"/>
    <property type="evidence" value="ECO:0007669"/>
    <property type="project" value="UniProtKB-SubCell"/>
</dbReference>
<dbReference type="HAMAP" id="MF_01562">
    <property type="entry name" value="FloA"/>
    <property type="match status" value="1"/>
</dbReference>
<dbReference type="InterPro" id="IPR022853">
    <property type="entry name" value="FloA"/>
</dbReference>
<dbReference type="NCBIfam" id="NF010186">
    <property type="entry name" value="PRK13665.1"/>
    <property type="match status" value="1"/>
</dbReference>
<dbReference type="Pfam" id="PF12127">
    <property type="entry name" value="FloA"/>
    <property type="match status" value="1"/>
</dbReference>
<proteinExistence type="inferred from homology"/>
<gene>
    <name evidence="1" type="primary">floA</name>
    <name type="ordered locus">DSY1747</name>
</gene>
<comment type="function">
    <text evidence="1">Found in functional membrane microdomains (FMM) that may be equivalent to eukaryotic membrane rafts. FMMs are highly dynamic and increase in number as cells age. Flotillins are thought to be important factors in membrane fluidity.</text>
</comment>
<comment type="subunit">
    <text evidence="1">Homooligomerizes.</text>
</comment>
<comment type="subcellular location">
    <subcellularLocation>
        <location evidence="1">Cell membrane</location>
        <topology evidence="1">Multi-pass membrane protein</topology>
    </subcellularLocation>
    <subcellularLocation>
        <location evidence="1">Membrane raft</location>
        <topology evidence="1">Multi-pass membrane protein</topology>
    </subcellularLocation>
</comment>
<comment type="similarity">
    <text evidence="1">Belongs to the flotillin-like FloA family.</text>
</comment>
<name>FLOA_DESHY</name>
<accession>Q24WQ6</accession>